<evidence type="ECO:0000255" key="1">
    <source>
        <dbReference type="HAMAP-Rule" id="MF_01697"/>
    </source>
</evidence>
<protein>
    <recommendedName>
        <fullName evidence="1">L-cysteine:1D-myo-inositol 2-amino-2-deoxy-alpha-D-glucopyranoside ligase</fullName>
        <shortName evidence="1">L-Cys:GlcN-Ins ligase</shortName>
        <ecNumber evidence="1">6.3.1.13</ecNumber>
    </recommendedName>
    <alternativeName>
        <fullName evidence="1">Mycothiol ligase</fullName>
        <shortName evidence="1">MSH ligase</shortName>
    </alternativeName>
</protein>
<proteinExistence type="inferred from homology"/>
<dbReference type="EC" id="6.3.1.13" evidence="1"/>
<dbReference type="EMBL" id="CP000325">
    <property type="protein sequence ID" value="ABL04724.1"/>
    <property type="molecule type" value="Genomic_DNA"/>
</dbReference>
<dbReference type="RefSeq" id="WP_011740340.1">
    <property type="nucleotide sequence ID" value="NC_008611.1"/>
</dbReference>
<dbReference type="SMR" id="A0PQV5"/>
<dbReference type="KEGG" id="mul:MUL_2360"/>
<dbReference type="eggNOG" id="COG0215">
    <property type="taxonomic scope" value="Bacteria"/>
</dbReference>
<dbReference type="HOGENOM" id="CLU_013528_0_0_11"/>
<dbReference type="Proteomes" id="UP000000765">
    <property type="component" value="Chromosome"/>
</dbReference>
<dbReference type="GO" id="GO:0005829">
    <property type="term" value="C:cytosol"/>
    <property type="evidence" value="ECO:0007669"/>
    <property type="project" value="TreeGrafter"/>
</dbReference>
<dbReference type="GO" id="GO:0005524">
    <property type="term" value="F:ATP binding"/>
    <property type="evidence" value="ECO:0007669"/>
    <property type="project" value="UniProtKB-KW"/>
</dbReference>
<dbReference type="GO" id="GO:0035446">
    <property type="term" value="F:cysteine-glucosaminylinositol ligase activity"/>
    <property type="evidence" value="ECO:0007669"/>
    <property type="project" value="UniProtKB-UniRule"/>
</dbReference>
<dbReference type="GO" id="GO:0004817">
    <property type="term" value="F:cysteine-tRNA ligase activity"/>
    <property type="evidence" value="ECO:0007669"/>
    <property type="project" value="TreeGrafter"/>
</dbReference>
<dbReference type="GO" id="GO:0008270">
    <property type="term" value="F:zinc ion binding"/>
    <property type="evidence" value="ECO:0007669"/>
    <property type="project" value="UniProtKB-UniRule"/>
</dbReference>
<dbReference type="GO" id="GO:0006423">
    <property type="term" value="P:cysteinyl-tRNA aminoacylation"/>
    <property type="evidence" value="ECO:0007669"/>
    <property type="project" value="TreeGrafter"/>
</dbReference>
<dbReference type="GO" id="GO:0010125">
    <property type="term" value="P:mycothiol biosynthetic process"/>
    <property type="evidence" value="ECO:0007669"/>
    <property type="project" value="UniProtKB-UniRule"/>
</dbReference>
<dbReference type="CDD" id="cd07955">
    <property type="entry name" value="Anticodon_Ia_Cys_like"/>
    <property type="match status" value="1"/>
</dbReference>
<dbReference type="CDD" id="cd00672">
    <property type="entry name" value="CysRS_core"/>
    <property type="match status" value="1"/>
</dbReference>
<dbReference type="FunFam" id="3.40.50.620:FF:000134">
    <property type="entry name" value="L-cysteine:1D-myo-inositol 2-amino-2-deoxy-alpha-D-glucopyranoside ligase"/>
    <property type="match status" value="1"/>
</dbReference>
<dbReference type="Gene3D" id="1.20.120.640">
    <property type="entry name" value="Anticodon-binding domain of a subclass of class I aminoacyl-tRNA synthetases"/>
    <property type="match status" value="1"/>
</dbReference>
<dbReference type="Gene3D" id="3.40.50.620">
    <property type="entry name" value="HUPs"/>
    <property type="match status" value="1"/>
</dbReference>
<dbReference type="HAMAP" id="MF_01697">
    <property type="entry name" value="MshC"/>
    <property type="match status" value="1"/>
</dbReference>
<dbReference type="InterPro" id="IPR024909">
    <property type="entry name" value="Cys-tRNA/MSH_ligase"/>
</dbReference>
<dbReference type="InterPro" id="IPR017812">
    <property type="entry name" value="Mycothiol_ligase_MshC"/>
</dbReference>
<dbReference type="InterPro" id="IPR014729">
    <property type="entry name" value="Rossmann-like_a/b/a_fold"/>
</dbReference>
<dbReference type="InterPro" id="IPR032678">
    <property type="entry name" value="tRNA-synt_1_cat_dom"/>
</dbReference>
<dbReference type="InterPro" id="IPR009080">
    <property type="entry name" value="tRNAsynth_Ia_anticodon-bd"/>
</dbReference>
<dbReference type="NCBIfam" id="TIGR03447">
    <property type="entry name" value="mycothiol_MshC"/>
    <property type="match status" value="1"/>
</dbReference>
<dbReference type="PANTHER" id="PTHR10890:SF3">
    <property type="entry name" value="CYSTEINE--TRNA LIGASE, CYTOPLASMIC"/>
    <property type="match status" value="1"/>
</dbReference>
<dbReference type="PANTHER" id="PTHR10890">
    <property type="entry name" value="CYSTEINYL-TRNA SYNTHETASE"/>
    <property type="match status" value="1"/>
</dbReference>
<dbReference type="Pfam" id="PF01406">
    <property type="entry name" value="tRNA-synt_1e"/>
    <property type="match status" value="1"/>
</dbReference>
<dbReference type="PRINTS" id="PR00983">
    <property type="entry name" value="TRNASYNTHCYS"/>
</dbReference>
<dbReference type="SUPFAM" id="SSF47323">
    <property type="entry name" value="Anticodon-binding domain of a subclass of class I aminoacyl-tRNA synthetases"/>
    <property type="match status" value="1"/>
</dbReference>
<dbReference type="SUPFAM" id="SSF52374">
    <property type="entry name" value="Nucleotidylyl transferase"/>
    <property type="match status" value="1"/>
</dbReference>
<keyword id="KW-0067">ATP-binding</keyword>
<keyword id="KW-0436">Ligase</keyword>
<keyword id="KW-0479">Metal-binding</keyword>
<keyword id="KW-0547">Nucleotide-binding</keyword>
<keyword id="KW-0862">Zinc</keyword>
<organism>
    <name type="scientific">Mycobacterium ulcerans (strain Agy99)</name>
    <dbReference type="NCBI Taxonomy" id="362242"/>
    <lineage>
        <taxon>Bacteria</taxon>
        <taxon>Bacillati</taxon>
        <taxon>Actinomycetota</taxon>
        <taxon>Actinomycetes</taxon>
        <taxon>Mycobacteriales</taxon>
        <taxon>Mycobacteriaceae</taxon>
        <taxon>Mycobacterium</taxon>
        <taxon>Mycobacterium ulcerans group</taxon>
    </lineage>
</organism>
<accession>A0PQV5</accession>
<feature type="chain" id="PRO_0000400469" description="L-cysteine:1D-myo-inositol 2-amino-2-deoxy-alpha-D-glucopyranoside ligase">
    <location>
        <begin position="1"/>
        <end position="411"/>
    </location>
</feature>
<feature type="short sequence motif" description="'HIGH' region" evidence="1">
    <location>
        <begin position="45"/>
        <end position="55"/>
    </location>
</feature>
<feature type="short sequence motif" description="'ERGGDP' region" evidence="1">
    <location>
        <begin position="186"/>
        <end position="191"/>
    </location>
</feature>
<feature type="short sequence motif" description="'KMSKS' region" evidence="1">
    <location>
        <begin position="288"/>
        <end position="292"/>
    </location>
</feature>
<feature type="binding site" evidence="1">
    <location>
        <begin position="43"/>
        <end position="46"/>
    </location>
    <ligand>
        <name>L-cysteinyl-5'-AMP</name>
        <dbReference type="ChEBI" id="CHEBI:144924"/>
    </ligand>
</feature>
<feature type="binding site" evidence="1">
    <location>
        <position position="43"/>
    </location>
    <ligand>
        <name>Zn(2+)</name>
        <dbReference type="ChEBI" id="CHEBI:29105"/>
    </ligand>
</feature>
<feature type="binding site" evidence="1">
    <location>
        <position position="58"/>
    </location>
    <ligand>
        <name>L-cysteinyl-5'-AMP</name>
        <dbReference type="ChEBI" id="CHEBI:144924"/>
    </ligand>
</feature>
<feature type="binding site" evidence="1">
    <location>
        <begin position="81"/>
        <end position="83"/>
    </location>
    <ligand>
        <name>L-cysteinyl-5'-AMP</name>
        <dbReference type="ChEBI" id="CHEBI:144924"/>
    </ligand>
</feature>
<feature type="binding site" evidence="1">
    <location>
        <position position="226"/>
    </location>
    <ligand>
        <name>L-cysteinyl-5'-AMP</name>
        <dbReference type="ChEBI" id="CHEBI:144924"/>
    </ligand>
</feature>
<feature type="binding site" evidence="1">
    <location>
        <position position="230"/>
    </location>
    <ligand>
        <name>Zn(2+)</name>
        <dbReference type="ChEBI" id="CHEBI:29105"/>
    </ligand>
</feature>
<feature type="binding site" evidence="1">
    <location>
        <begin position="248"/>
        <end position="250"/>
    </location>
    <ligand>
        <name>L-cysteinyl-5'-AMP</name>
        <dbReference type="ChEBI" id="CHEBI:144924"/>
    </ligand>
</feature>
<feature type="binding site" evidence="1">
    <location>
        <position position="255"/>
    </location>
    <ligand>
        <name>Zn(2+)</name>
        <dbReference type="ChEBI" id="CHEBI:29105"/>
    </ligand>
</feature>
<feature type="binding site" evidence="1">
    <location>
        <position position="282"/>
    </location>
    <ligand>
        <name>L-cysteinyl-5'-AMP</name>
        <dbReference type="ChEBI" id="CHEBI:144924"/>
    </ligand>
</feature>
<sequence>MQSWSSAPVPIVPGREPELRLYDTADRQVRPVAPGNTATMYVCGITPYDATHLGHAATYLAFDLIHRLWLDLGHEVRYVQNVTDVDDPLFERADRDGVDWRDLAAQEVALFREDMAALRVLSPHDYVGATEAVAEIIELVEKLLASGAAYVLDGEHPDVYYRSDATLQFGYESGYDRDTMLGLFEQRGGDPGRPGKNDALDALLWRAARPGEPSWPSPFGPGRPGWHIECAAIALSRVGSGLDVQGGGSDLIFPHHEFTAAHAECVTGEQRFARHYVHAGMIGWDGHKMSKSRGNLVLVSGLRAEGVNPAAVRLGLLAGHYRADRFWSQQVLDEAVGRLQRWRAATTLPAGPDAAAVVARVRQYLADDLNTPKAIAALDGWATDALDYGGHDEVAPRLVASTIDALLGVDL</sequence>
<gene>
    <name evidence="1" type="primary">mshC</name>
    <name type="ordered locus">MUL_2360</name>
</gene>
<name>MSHC_MYCUA</name>
<reference key="1">
    <citation type="journal article" date="2007" name="Genome Res.">
        <title>Reductive evolution and niche adaptation inferred from the genome of Mycobacterium ulcerans, the causative agent of Buruli ulcer.</title>
        <authorList>
            <person name="Stinear T.P."/>
            <person name="Seemann T."/>
            <person name="Pidot S."/>
            <person name="Frigui W."/>
            <person name="Reysset G."/>
            <person name="Garnier T."/>
            <person name="Meurice G."/>
            <person name="Simon D."/>
            <person name="Bouchier C."/>
            <person name="Ma L."/>
            <person name="Tichit M."/>
            <person name="Porter J.L."/>
            <person name="Ryan J."/>
            <person name="Johnson P.D.R."/>
            <person name="Davies J.K."/>
            <person name="Jenkin G.A."/>
            <person name="Small P.L.C."/>
            <person name="Jones L.M."/>
            <person name="Tekaia F."/>
            <person name="Laval F."/>
            <person name="Daffe M."/>
            <person name="Parkhill J."/>
            <person name="Cole S.T."/>
        </authorList>
    </citation>
    <scope>NUCLEOTIDE SEQUENCE [LARGE SCALE GENOMIC DNA]</scope>
    <source>
        <strain>Agy99</strain>
    </source>
</reference>
<comment type="function">
    <text evidence="1">Catalyzes the ATP-dependent condensation of GlcN-Ins and L-cysteine to form L-Cys-GlcN-Ins.</text>
</comment>
<comment type="catalytic activity">
    <reaction evidence="1">
        <text>1D-myo-inositol 2-amino-2-deoxy-alpha-D-glucopyranoside + L-cysteine + ATP = 1D-myo-inositol 2-(L-cysteinylamino)-2-deoxy-alpha-D-glucopyranoside + AMP + diphosphate + H(+)</text>
        <dbReference type="Rhea" id="RHEA:26176"/>
        <dbReference type="ChEBI" id="CHEBI:15378"/>
        <dbReference type="ChEBI" id="CHEBI:30616"/>
        <dbReference type="ChEBI" id="CHEBI:33019"/>
        <dbReference type="ChEBI" id="CHEBI:35235"/>
        <dbReference type="ChEBI" id="CHEBI:58886"/>
        <dbReference type="ChEBI" id="CHEBI:58887"/>
        <dbReference type="ChEBI" id="CHEBI:456215"/>
        <dbReference type="EC" id="6.3.1.13"/>
    </reaction>
</comment>
<comment type="cofactor">
    <cofactor evidence="1">
        <name>Zn(2+)</name>
        <dbReference type="ChEBI" id="CHEBI:29105"/>
    </cofactor>
    <text evidence="1">Binds 1 zinc ion per subunit.</text>
</comment>
<comment type="subunit">
    <text evidence="1">Monomer.</text>
</comment>
<comment type="similarity">
    <text evidence="1">Belongs to the class-I aminoacyl-tRNA synthetase family. MshC subfamily.</text>
</comment>